<evidence type="ECO:0000255" key="1">
    <source>
        <dbReference type="HAMAP-Rule" id="MF_01007"/>
    </source>
</evidence>
<sequence length="332" mass="36804">MTKQDQRAERHIPVLLQPVLAGLMPLVGAKVIDGTFGAGGYTRALLKAGAQVIALDRDPHAIAAGQSLVDEFFPRLRLVHMEFSQLDRVVEEKVDAVILDIGVSSMQLDEAERGFSFQKDGPLDMRMAQTGFSASDVVNHLKAKDLARIFKILGEERYAGRIARMIEKRRAVQPFLRTGDLAYAIEALVGRKPGDRIHPATRVFQALRIYVNDEIGELARGLFAAERVLKAGGRLGVVSFHSLEDRMVKRFFVSRSGEGMRSRHLPEIKHSPATFFPLFKGGITANKEELQQNPRSRSARLRMGVRTNAEALAEDMKLFGLAEIASFEGGKK</sequence>
<dbReference type="EC" id="2.1.1.199" evidence="1"/>
<dbReference type="EMBL" id="AM260525">
    <property type="protein sequence ID" value="CAK01938.1"/>
    <property type="molecule type" value="Genomic_DNA"/>
</dbReference>
<dbReference type="RefSeq" id="WP_012232064.1">
    <property type="nucleotide sequence ID" value="NC_010161.1"/>
</dbReference>
<dbReference type="SMR" id="A9IWB6"/>
<dbReference type="KEGG" id="btr:BT_1599"/>
<dbReference type="eggNOG" id="COG0275">
    <property type="taxonomic scope" value="Bacteria"/>
</dbReference>
<dbReference type="HOGENOM" id="CLU_038422_1_1_5"/>
<dbReference type="Proteomes" id="UP000001592">
    <property type="component" value="Chromosome"/>
</dbReference>
<dbReference type="GO" id="GO:0005737">
    <property type="term" value="C:cytoplasm"/>
    <property type="evidence" value="ECO:0007669"/>
    <property type="project" value="UniProtKB-SubCell"/>
</dbReference>
<dbReference type="GO" id="GO:0071424">
    <property type="term" value="F:rRNA (cytosine-N4-)-methyltransferase activity"/>
    <property type="evidence" value="ECO:0007669"/>
    <property type="project" value="UniProtKB-UniRule"/>
</dbReference>
<dbReference type="GO" id="GO:0070475">
    <property type="term" value="P:rRNA base methylation"/>
    <property type="evidence" value="ECO:0007669"/>
    <property type="project" value="UniProtKB-UniRule"/>
</dbReference>
<dbReference type="CDD" id="cd02440">
    <property type="entry name" value="AdoMet_MTases"/>
    <property type="match status" value="1"/>
</dbReference>
<dbReference type="Gene3D" id="1.10.150.170">
    <property type="entry name" value="Putative methyltransferase TM0872, insert domain"/>
    <property type="match status" value="1"/>
</dbReference>
<dbReference type="Gene3D" id="3.40.50.150">
    <property type="entry name" value="Vaccinia Virus protein VP39"/>
    <property type="match status" value="1"/>
</dbReference>
<dbReference type="HAMAP" id="MF_01007">
    <property type="entry name" value="16SrRNA_methyltr_H"/>
    <property type="match status" value="1"/>
</dbReference>
<dbReference type="InterPro" id="IPR002903">
    <property type="entry name" value="RsmH"/>
</dbReference>
<dbReference type="InterPro" id="IPR023397">
    <property type="entry name" value="SAM-dep_MeTrfase_MraW_recog"/>
</dbReference>
<dbReference type="InterPro" id="IPR029063">
    <property type="entry name" value="SAM-dependent_MTases_sf"/>
</dbReference>
<dbReference type="NCBIfam" id="TIGR00006">
    <property type="entry name" value="16S rRNA (cytosine(1402)-N(4))-methyltransferase RsmH"/>
    <property type="match status" value="1"/>
</dbReference>
<dbReference type="PANTHER" id="PTHR11265:SF0">
    <property type="entry name" value="12S RRNA N4-METHYLCYTIDINE METHYLTRANSFERASE"/>
    <property type="match status" value="1"/>
</dbReference>
<dbReference type="PANTHER" id="PTHR11265">
    <property type="entry name" value="S-ADENOSYL-METHYLTRANSFERASE MRAW"/>
    <property type="match status" value="1"/>
</dbReference>
<dbReference type="Pfam" id="PF01795">
    <property type="entry name" value="Methyltransf_5"/>
    <property type="match status" value="1"/>
</dbReference>
<dbReference type="PIRSF" id="PIRSF004486">
    <property type="entry name" value="MraW"/>
    <property type="match status" value="1"/>
</dbReference>
<dbReference type="SUPFAM" id="SSF81799">
    <property type="entry name" value="Putative methyltransferase TM0872, insert domain"/>
    <property type="match status" value="1"/>
</dbReference>
<dbReference type="SUPFAM" id="SSF53335">
    <property type="entry name" value="S-adenosyl-L-methionine-dependent methyltransferases"/>
    <property type="match status" value="1"/>
</dbReference>
<protein>
    <recommendedName>
        <fullName evidence="1">Ribosomal RNA small subunit methyltransferase H</fullName>
        <ecNumber evidence="1">2.1.1.199</ecNumber>
    </recommendedName>
    <alternativeName>
        <fullName evidence="1">16S rRNA m(4)C1402 methyltransferase</fullName>
    </alternativeName>
    <alternativeName>
        <fullName evidence="1">rRNA (cytosine-N(4)-)-methyltransferase RsmH</fullName>
    </alternativeName>
</protein>
<organism>
    <name type="scientific">Bartonella tribocorum (strain CIP 105476 / IBS 506)</name>
    <dbReference type="NCBI Taxonomy" id="382640"/>
    <lineage>
        <taxon>Bacteria</taxon>
        <taxon>Pseudomonadati</taxon>
        <taxon>Pseudomonadota</taxon>
        <taxon>Alphaproteobacteria</taxon>
        <taxon>Hyphomicrobiales</taxon>
        <taxon>Bartonellaceae</taxon>
        <taxon>Bartonella</taxon>
    </lineage>
</organism>
<reference key="1">
    <citation type="journal article" date="2007" name="Nat. Genet.">
        <title>Genomic analysis of Bartonella identifies type IV secretion systems as host adaptability factors.</title>
        <authorList>
            <person name="Saenz H.L."/>
            <person name="Engel P."/>
            <person name="Stoeckli M.C."/>
            <person name="Lanz C."/>
            <person name="Raddatz G."/>
            <person name="Vayssier-Taussat M."/>
            <person name="Birtles R."/>
            <person name="Schuster S.C."/>
            <person name="Dehio C."/>
        </authorList>
    </citation>
    <scope>NUCLEOTIDE SEQUENCE [LARGE SCALE GENOMIC DNA]</scope>
    <source>
        <strain>CIP 105476 / IBS 506</strain>
    </source>
</reference>
<name>RSMH_BART1</name>
<gene>
    <name evidence="1" type="primary">rsmH</name>
    <name type="synonym">mraW</name>
    <name type="ordered locus">BT_1599</name>
</gene>
<keyword id="KW-0963">Cytoplasm</keyword>
<keyword id="KW-0489">Methyltransferase</keyword>
<keyword id="KW-0698">rRNA processing</keyword>
<keyword id="KW-0949">S-adenosyl-L-methionine</keyword>
<keyword id="KW-0808">Transferase</keyword>
<feature type="chain" id="PRO_0000386741" description="Ribosomal RNA small subunit methyltransferase H">
    <location>
        <begin position="1"/>
        <end position="332"/>
    </location>
</feature>
<feature type="binding site" evidence="1">
    <location>
        <begin position="39"/>
        <end position="41"/>
    </location>
    <ligand>
        <name>S-adenosyl-L-methionine</name>
        <dbReference type="ChEBI" id="CHEBI:59789"/>
    </ligand>
</feature>
<feature type="binding site" evidence="1">
    <location>
        <position position="56"/>
    </location>
    <ligand>
        <name>S-adenosyl-L-methionine</name>
        <dbReference type="ChEBI" id="CHEBI:59789"/>
    </ligand>
</feature>
<feature type="binding site" evidence="1">
    <location>
        <position position="83"/>
    </location>
    <ligand>
        <name>S-adenosyl-L-methionine</name>
        <dbReference type="ChEBI" id="CHEBI:59789"/>
    </ligand>
</feature>
<feature type="binding site" evidence="1">
    <location>
        <position position="100"/>
    </location>
    <ligand>
        <name>S-adenosyl-L-methionine</name>
        <dbReference type="ChEBI" id="CHEBI:59789"/>
    </ligand>
</feature>
<feature type="binding site" evidence="1">
    <location>
        <position position="107"/>
    </location>
    <ligand>
        <name>S-adenosyl-L-methionine</name>
        <dbReference type="ChEBI" id="CHEBI:59789"/>
    </ligand>
</feature>
<proteinExistence type="inferred from homology"/>
<accession>A9IWB6</accession>
<comment type="function">
    <text evidence="1">Specifically methylates the N4 position of cytidine in position 1402 (C1402) of 16S rRNA.</text>
</comment>
<comment type="catalytic activity">
    <reaction evidence="1">
        <text>cytidine(1402) in 16S rRNA + S-adenosyl-L-methionine = N(4)-methylcytidine(1402) in 16S rRNA + S-adenosyl-L-homocysteine + H(+)</text>
        <dbReference type="Rhea" id="RHEA:42928"/>
        <dbReference type="Rhea" id="RHEA-COMP:10286"/>
        <dbReference type="Rhea" id="RHEA-COMP:10287"/>
        <dbReference type="ChEBI" id="CHEBI:15378"/>
        <dbReference type="ChEBI" id="CHEBI:57856"/>
        <dbReference type="ChEBI" id="CHEBI:59789"/>
        <dbReference type="ChEBI" id="CHEBI:74506"/>
        <dbReference type="ChEBI" id="CHEBI:82748"/>
        <dbReference type="EC" id="2.1.1.199"/>
    </reaction>
</comment>
<comment type="subcellular location">
    <subcellularLocation>
        <location evidence="1">Cytoplasm</location>
    </subcellularLocation>
</comment>
<comment type="similarity">
    <text evidence="1">Belongs to the methyltransferase superfamily. RsmH family.</text>
</comment>